<protein>
    <recommendedName>
        <fullName>Triosephosphate isomerase</fullName>
        <shortName>TIM</shortName>
        <ecNumber>5.3.1.1</ecNumber>
    </recommendedName>
    <alternativeName>
        <fullName>Triose-phosphate isomerase</fullName>
    </alternativeName>
</protein>
<feature type="chain" id="PRO_0000090160" description="Triosephosphate isomerase">
    <location>
        <begin position="1"/>
        <end position="251"/>
    </location>
</feature>
<feature type="active site" description="Electrophile" evidence="1">
    <location>
        <position position="95"/>
    </location>
</feature>
<feature type="active site" description="Proton acceptor" evidence="1">
    <location>
        <position position="167"/>
    </location>
</feature>
<feature type="binding site" evidence="1">
    <location>
        <position position="10"/>
    </location>
    <ligand>
        <name>substrate</name>
    </ligand>
</feature>
<feature type="binding site" evidence="1">
    <location>
        <position position="12"/>
    </location>
    <ligand>
        <name>substrate</name>
    </ligand>
</feature>
<feature type="sequence conflict" description="In Ref. 1; AAA79845." evidence="2" ref="1">
    <original>L</original>
    <variation>P</variation>
    <location>
        <position position="24"/>
    </location>
</feature>
<organism>
    <name type="scientific">Coprinopsis cinerea (strain Okayama-7 / 130 / ATCC MYA-4618 / FGSC 9003)</name>
    <name type="common">Inky cap fungus</name>
    <name type="synonym">Hormographiella aspergillata</name>
    <dbReference type="NCBI Taxonomy" id="240176"/>
    <lineage>
        <taxon>Eukaryota</taxon>
        <taxon>Fungi</taxon>
        <taxon>Dikarya</taxon>
        <taxon>Basidiomycota</taxon>
        <taxon>Agaricomycotina</taxon>
        <taxon>Agaricomycetes</taxon>
        <taxon>Agaricomycetidae</taxon>
        <taxon>Agaricales</taxon>
        <taxon>Agaricineae</taxon>
        <taxon>Psathyrellaceae</taxon>
        <taxon>Coprinopsis</taxon>
    </lineage>
</organism>
<proteinExistence type="inferred from homology"/>
<gene>
    <name type="primary">TPI</name>
    <name type="ORF">CC1G_07287</name>
</gene>
<evidence type="ECO:0000250" key="1"/>
<evidence type="ECO:0000305" key="2"/>
<name>TPIS_COPC7</name>
<accession>Q12574</accession>
<accession>A8NNK1</accession>
<dbReference type="EC" id="5.3.1.1"/>
<dbReference type="EMBL" id="U23079">
    <property type="protein sequence ID" value="AAA79845.1"/>
    <property type="molecule type" value="Genomic_DNA"/>
</dbReference>
<dbReference type="EMBL" id="AACS02000012">
    <property type="protein sequence ID" value="EAU86629.1"/>
    <property type="molecule type" value="Genomic_DNA"/>
</dbReference>
<dbReference type="RefSeq" id="XP_001835145.1">
    <property type="nucleotide sequence ID" value="XM_001835093.2"/>
</dbReference>
<dbReference type="SMR" id="Q12574"/>
<dbReference type="FunCoup" id="Q12574">
    <property type="interactions" value="509"/>
</dbReference>
<dbReference type="STRING" id="240176.Q12574"/>
<dbReference type="GeneID" id="6011672"/>
<dbReference type="KEGG" id="cci:CC1G_07287"/>
<dbReference type="VEuPathDB" id="FungiDB:CC1G_07287"/>
<dbReference type="eggNOG" id="KOG1643">
    <property type="taxonomic scope" value="Eukaryota"/>
</dbReference>
<dbReference type="HOGENOM" id="CLU_024251_2_3_1"/>
<dbReference type="InParanoid" id="Q12574"/>
<dbReference type="OMA" id="NWKMHMT"/>
<dbReference type="OrthoDB" id="6715177at2759"/>
<dbReference type="UniPathway" id="UPA00109">
    <property type="reaction ID" value="UER00189"/>
</dbReference>
<dbReference type="UniPathway" id="UPA00138"/>
<dbReference type="Proteomes" id="UP000001861">
    <property type="component" value="Unassembled WGS sequence"/>
</dbReference>
<dbReference type="GO" id="GO:0005829">
    <property type="term" value="C:cytosol"/>
    <property type="evidence" value="ECO:0007669"/>
    <property type="project" value="TreeGrafter"/>
</dbReference>
<dbReference type="GO" id="GO:0004807">
    <property type="term" value="F:triose-phosphate isomerase activity"/>
    <property type="evidence" value="ECO:0007669"/>
    <property type="project" value="UniProtKB-EC"/>
</dbReference>
<dbReference type="GO" id="GO:0006094">
    <property type="term" value="P:gluconeogenesis"/>
    <property type="evidence" value="ECO:0007669"/>
    <property type="project" value="UniProtKB-UniPathway"/>
</dbReference>
<dbReference type="GO" id="GO:0046166">
    <property type="term" value="P:glyceraldehyde-3-phosphate biosynthetic process"/>
    <property type="evidence" value="ECO:0007669"/>
    <property type="project" value="TreeGrafter"/>
</dbReference>
<dbReference type="GO" id="GO:0019563">
    <property type="term" value="P:glycerol catabolic process"/>
    <property type="evidence" value="ECO:0007669"/>
    <property type="project" value="TreeGrafter"/>
</dbReference>
<dbReference type="GO" id="GO:0006096">
    <property type="term" value="P:glycolytic process"/>
    <property type="evidence" value="ECO:0007669"/>
    <property type="project" value="UniProtKB-UniPathway"/>
</dbReference>
<dbReference type="CDD" id="cd00311">
    <property type="entry name" value="TIM"/>
    <property type="match status" value="1"/>
</dbReference>
<dbReference type="FunFam" id="3.20.20.70:FF:000025">
    <property type="entry name" value="Triosephosphate isomerase"/>
    <property type="match status" value="1"/>
</dbReference>
<dbReference type="Gene3D" id="3.20.20.70">
    <property type="entry name" value="Aldolase class I"/>
    <property type="match status" value="1"/>
</dbReference>
<dbReference type="HAMAP" id="MF_00147_B">
    <property type="entry name" value="TIM_B"/>
    <property type="match status" value="1"/>
</dbReference>
<dbReference type="InterPro" id="IPR013785">
    <property type="entry name" value="Aldolase_TIM"/>
</dbReference>
<dbReference type="InterPro" id="IPR035990">
    <property type="entry name" value="TIM_sf"/>
</dbReference>
<dbReference type="InterPro" id="IPR022896">
    <property type="entry name" value="TrioseP_Isoase_bac/euk"/>
</dbReference>
<dbReference type="InterPro" id="IPR000652">
    <property type="entry name" value="Triosephosphate_isomerase"/>
</dbReference>
<dbReference type="InterPro" id="IPR020861">
    <property type="entry name" value="Triosephosphate_isomerase_AS"/>
</dbReference>
<dbReference type="NCBIfam" id="TIGR00419">
    <property type="entry name" value="tim"/>
    <property type="match status" value="1"/>
</dbReference>
<dbReference type="PANTHER" id="PTHR21139">
    <property type="entry name" value="TRIOSEPHOSPHATE ISOMERASE"/>
    <property type="match status" value="1"/>
</dbReference>
<dbReference type="PANTHER" id="PTHR21139:SF41">
    <property type="entry name" value="TRIOSEPHOSPHATE ISOMERASE"/>
    <property type="match status" value="1"/>
</dbReference>
<dbReference type="Pfam" id="PF00121">
    <property type="entry name" value="TIM"/>
    <property type="match status" value="1"/>
</dbReference>
<dbReference type="SUPFAM" id="SSF51351">
    <property type="entry name" value="Triosephosphate isomerase (TIM)"/>
    <property type="match status" value="1"/>
</dbReference>
<dbReference type="PROSITE" id="PS00171">
    <property type="entry name" value="TIM_1"/>
    <property type="match status" value="1"/>
</dbReference>
<dbReference type="PROSITE" id="PS51440">
    <property type="entry name" value="TIM_2"/>
    <property type="match status" value="1"/>
</dbReference>
<comment type="catalytic activity">
    <reaction>
        <text>D-glyceraldehyde 3-phosphate = dihydroxyacetone phosphate</text>
        <dbReference type="Rhea" id="RHEA:18585"/>
        <dbReference type="ChEBI" id="CHEBI:57642"/>
        <dbReference type="ChEBI" id="CHEBI:59776"/>
        <dbReference type="EC" id="5.3.1.1"/>
    </reaction>
</comment>
<comment type="pathway">
    <text>Carbohydrate biosynthesis; gluconeogenesis.</text>
</comment>
<comment type="pathway">
    <text>Carbohydrate degradation; glycolysis; D-glyceraldehyde 3-phosphate from glycerone phosphate: step 1/1.</text>
</comment>
<comment type="subunit">
    <text evidence="1">Homodimer.</text>
</comment>
<comment type="similarity">
    <text evidence="2">Belongs to the triosephosphate isomerase family.</text>
</comment>
<sequence length="251" mass="26884">MTRSFFVGGNWKLNPTSLSAAKALVEALNKADLDPSTEVVVAPPALYLLPIQEIAGKAVKVAAQNAYFKESGAFTGEISPKQISDAGIPYVILGHSERRTLFHETSEVVALKTRAALDNGLKVILCIGETLKEREEGRTAAVCEEQLSAVVKQLKEEDWSNIVIAYEPVWAIGTGKVATTSQAQETHVDVRKYLATAVSPKVASETRVIYGGSVNAANSKDLASQQDIDGFLVGGASLKPEFVDIINARKA</sequence>
<reference key="1">
    <citation type="journal article" date="1995" name="Proc. Natl. Acad. Sci. U.S.A.">
        <title>Seven newly discovered intron positions in the triose-phosphate isomerase gene: evidence for the introns-late theory.</title>
        <authorList>
            <person name="Logsdon J.M. Jr."/>
            <person name="Tyshenko M.G."/>
            <person name="Dixon C."/>
            <person name="D-Jafari J."/>
            <person name="Walker V.K."/>
            <person name="Palmer J.D."/>
        </authorList>
    </citation>
    <scope>NUCLEOTIDE SEQUENCE [GENOMIC DNA]</scope>
</reference>
<reference key="2">
    <citation type="journal article" date="2010" name="Proc. Natl. Acad. Sci. U.S.A.">
        <title>Insights into evolution of multicellular fungi from the assembled chromosomes of the mushroom Coprinopsis cinerea (Coprinus cinereus).</title>
        <authorList>
            <person name="Stajich J.E."/>
            <person name="Wilke S.K."/>
            <person name="Ahren D."/>
            <person name="Au C.H."/>
            <person name="Birren B.W."/>
            <person name="Borodovsky M."/>
            <person name="Burns C."/>
            <person name="Canbaeck B."/>
            <person name="Casselton L.A."/>
            <person name="Cheng C.K."/>
            <person name="Deng J."/>
            <person name="Dietrich F.S."/>
            <person name="Fargo D.C."/>
            <person name="Farman M.L."/>
            <person name="Gathman A.C."/>
            <person name="Goldberg J."/>
            <person name="Guigo R."/>
            <person name="Hoegger P.J."/>
            <person name="Hooker J.B."/>
            <person name="Huggins A."/>
            <person name="James T.Y."/>
            <person name="Kamada T."/>
            <person name="Kilaru S."/>
            <person name="Kodira C."/>
            <person name="Kuees U."/>
            <person name="Kupfer D."/>
            <person name="Kwan H.S."/>
            <person name="Lomsadze A."/>
            <person name="Li W."/>
            <person name="Lilly W.W."/>
            <person name="Ma L.-J."/>
            <person name="Mackey A.J."/>
            <person name="Manning G."/>
            <person name="Martin F."/>
            <person name="Muraguchi H."/>
            <person name="Natvig D.O."/>
            <person name="Palmerini H."/>
            <person name="Ramesh M.A."/>
            <person name="Rehmeyer C.J."/>
            <person name="Roe B.A."/>
            <person name="Shenoy N."/>
            <person name="Stanke M."/>
            <person name="Ter-Hovhannisyan V."/>
            <person name="Tunlid A."/>
            <person name="Velagapudi R."/>
            <person name="Vision T.J."/>
            <person name="Zeng Q."/>
            <person name="Zolan M.E."/>
            <person name="Pukkila P.J."/>
        </authorList>
    </citation>
    <scope>NUCLEOTIDE SEQUENCE [LARGE SCALE GENOMIC DNA]</scope>
    <source>
        <strain>Okayama-7 / 130 / ATCC MYA-4618 / FGSC 9003</strain>
    </source>
</reference>
<keyword id="KW-0312">Gluconeogenesis</keyword>
<keyword id="KW-0324">Glycolysis</keyword>
<keyword id="KW-0413">Isomerase</keyword>
<keyword id="KW-1185">Reference proteome</keyword>